<accession>Q9NYH9</accession>
<accession>Q8IX96</accession>
<accession>Q96BL2</accession>
<accession>Q9NQ91</accession>
<evidence type="ECO:0000269" key="1">
    <source>
    </source>
</evidence>
<evidence type="ECO:0000269" key="2">
    <source>
    </source>
</evidence>
<evidence type="ECO:0000269" key="3">
    <source>
    </source>
</evidence>
<evidence type="ECO:0000269" key="4">
    <source>
    </source>
</evidence>
<evidence type="ECO:0000305" key="5"/>
<evidence type="ECO:0000312" key="6">
    <source>
        <dbReference type="HGNC" id="HGNC:18279"/>
    </source>
</evidence>
<evidence type="ECO:0007744" key="7">
    <source>
        <dbReference type="PDB" id="7MQ8"/>
    </source>
</evidence>
<evidence type="ECO:0007744" key="8">
    <source>
        <dbReference type="PDB" id="7MQ9"/>
    </source>
</evidence>
<evidence type="ECO:0007744" key="9">
    <source>
        <dbReference type="PDB" id="7MQA"/>
    </source>
</evidence>
<dbReference type="EMBL" id="AF244135">
    <property type="protein sequence ID" value="AAF66244.1"/>
    <property type="molecule type" value="mRNA"/>
</dbReference>
<dbReference type="EMBL" id="AF334386">
    <property type="protein sequence ID" value="AAO15382.1"/>
    <property type="molecule type" value="mRNA"/>
</dbReference>
<dbReference type="EMBL" id="BC015454">
    <property type="protein sequence ID" value="AAH15454.1"/>
    <property type="molecule type" value="mRNA"/>
</dbReference>
<dbReference type="EMBL" id="BC035325">
    <property type="protein sequence ID" value="AAH35325.1"/>
    <property type="molecule type" value="mRNA"/>
</dbReference>
<dbReference type="EMBL" id="AJ272197">
    <property type="protein sequence ID" value="CAB77268.1"/>
    <property type="molecule type" value="mRNA"/>
</dbReference>
<dbReference type="CCDS" id="CCDS11269.1"/>
<dbReference type="RefSeq" id="NP_060898.2">
    <property type="nucleotide sequence ID" value="NM_018428.2"/>
</dbReference>
<dbReference type="PDB" id="7MQ8">
    <property type="method" value="EM"/>
    <property type="resolution" value="3.60 A"/>
    <property type="chains" value="LP=1-597"/>
</dbReference>
<dbReference type="PDB" id="7MQ9">
    <property type="method" value="EM"/>
    <property type="resolution" value="3.87 A"/>
    <property type="chains" value="LP=1-597"/>
</dbReference>
<dbReference type="PDB" id="7MQA">
    <property type="method" value="EM"/>
    <property type="resolution" value="2.70 A"/>
    <property type="chains" value="LP=1-597"/>
</dbReference>
<dbReference type="PDBsum" id="7MQ8"/>
<dbReference type="PDBsum" id="7MQ9"/>
<dbReference type="PDBsum" id="7MQA"/>
<dbReference type="EMDB" id="EMD-23936"/>
<dbReference type="EMDB" id="EMD-23937"/>
<dbReference type="EMDB" id="EMD-23938"/>
<dbReference type="SMR" id="Q9NYH9"/>
<dbReference type="BioGRID" id="120923">
    <property type="interactions" value="101"/>
</dbReference>
<dbReference type="ComplexPortal" id="CPX-2688">
    <property type="entry name" value="UTP-B complex"/>
</dbReference>
<dbReference type="FunCoup" id="Q9NYH9">
    <property type="interactions" value="3460"/>
</dbReference>
<dbReference type="IntAct" id="Q9NYH9">
    <property type="interactions" value="63"/>
</dbReference>
<dbReference type="MINT" id="Q9NYH9"/>
<dbReference type="STRING" id="9606.ENSP00000261708"/>
<dbReference type="iPTMnet" id="Q9NYH9"/>
<dbReference type="PhosphoSitePlus" id="Q9NYH9"/>
<dbReference type="SwissPalm" id="Q9NYH9"/>
<dbReference type="BioMuta" id="UTP6"/>
<dbReference type="DMDM" id="134047946"/>
<dbReference type="jPOST" id="Q9NYH9"/>
<dbReference type="MassIVE" id="Q9NYH9"/>
<dbReference type="PaxDb" id="9606-ENSP00000261708"/>
<dbReference type="PeptideAtlas" id="Q9NYH9"/>
<dbReference type="ProteomicsDB" id="83231"/>
<dbReference type="Pumba" id="Q9NYH9"/>
<dbReference type="Antibodypedia" id="15269">
    <property type="antibodies" value="139 antibodies from 26 providers"/>
</dbReference>
<dbReference type="DNASU" id="55813"/>
<dbReference type="Ensembl" id="ENST00000261708.9">
    <property type="protein sequence ID" value="ENSP00000261708.4"/>
    <property type="gene ID" value="ENSG00000108651.10"/>
</dbReference>
<dbReference type="GeneID" id="55813"/>
<dbReference type="KEGG" id="hsa:55813"/>
<dbReference type="MANE-Select" id="ENST00000261708.9">
    <property type="protein sequence ID" value="ENSP00000261708.4"/>
    <property type="RefSeq nucleotide sequence ID" value="NM_018428.3"/>
    <property type="RefSeq protein sequence ID" value="NP_060898.2"/>
</dbReference>
<dbReference type="UCSC" id="uc002hgr.4">
    <property type="organism name" value="human"/>
</dbReference>
<dbReference type="AGR" id="HGNC:18279"/>
<dbReference type="CTD" id="55813"/>
<dbReference type="DisGeNET" id="55813"/>
<dbReference type="GeneCards" id="UTP6"/>
<dbReference type="HGNC" id="HGNC:18279">
    <property type="gene designation" value="UTP6"/>
</dbReference>
<dbReference type="HPA" id="ENSG00000108651">
    <property type="expression patterns" value="Low tissue specificity"/>
</dbReference>
<dbReference type="MIM" id="620948">
    <property type="type" value="gene"/>
</dbReference>
<dbReference type="neXtProt" id="NX_Q9NYH9"/>
<dbReference type="OpenTargets" id="ENSG00000108651"/>
<dbReference type="PharmGKB" id="PA142672224"/>
<dbReference type="VEuPathDB" id="HostDB:ENSG00000108651"/>
<dbReference type="eggNOG" id="KOG2396">
    <property type="taxonomic scope" value="Eukaryota"/>
</dbReference>
<dbReference type="GeneTree" id="ENSGT00390000016493"/>
<dbReference type="HOGENOM" id="CLU_026025_2_0_1"/>
<dbReference type="InParanoid" id="Q9NYH9"/>
<dbReference type="OMA" id="CKQWNAK"/>
<dbReference type="OrthoDB" id="28112at2759"/>
<dbReference type="PAN-GO" id="Q9NYH9">
    <property type="GO annotations" value="4 GO annotations based on evolutionary models"/>
</dbReference>
<dbReference type="PhylomeDB" id="Q9NYH9"/>
<dbReference type="TreeFam" id="TF323957"/>
<dbReference type="PathwayCommons" id="Q9NYH9"/>
<dbReference type="Reactome" id="R-HSA-6790901">
    <property type="pathway name" value="rRNA modification in the nucleus and cytosol"/>
</dbReference>
<dbReference type="Reactome" id="R-HSA-6791226">
    <property type="pathway name" value="Major pathway of rRNA processing in the nucleolus and cytosol"/>
</dbReference>
<dbReference type="SignaLink" id="Q9NYH9"/>
<dbReference type="BioGRID-ORCS" id="55813">
    <property type="hits" value="547 hits in 1125 CRISPR screens"/>
</dbReference>
<dbReference type="CD-CODE" id="8C2F96ED">
    <property type="entry name" value="Centrosome"/>
</dbReference>
<dbReference type="CD-CODE" id="91857CE7">
    <property type="entry name" value="Nucleolus"/>
</dbReference>
<dbReference type="ChiTaRS" id="UTP6">
    <property type="organism name" value="human"/>
</dbReference>
<dbReference type="GeneWiki" id="UTP6"/>
<dbReference type="GenomeRNAi" id="55813"/>
<dbReference type="Pharos" id="Q9NYH9">
    <property type="development level" value="Tbio"/>
</dbReference>
<dbReference type="PRO" id="PR:Q9NYH9"/>
<dbReference type="Proteomes" id="UP000005640">
    <property type="component" value="Chromosome 17"/>
</dbReference>
<dbReference type="RNAct" id="Q9NYH9">
    <property type="molecule type" value="protein"/>
</dbReference>
<dbReference type="Bgee" id="ENSG00000108651">
    <property type="expression patterns" value="Expressed in calcaneal tendon and 197 other cell types or tissues"/>
</dbReference>
<dbReference type="ExpressionAtlas" id="Q9NYH9">
    <property type="expression patterns" value="baseline and differential"/>
</dbReference>
<dbReference type="GO" id="GO:0005694">
    <property type="term" value="C:chromosome"/>
    <property type="evidence" value="ECO:0000314"/>
    <property type="project" value="HPA"/>
</dbReference>
<dbReference type="GO" id="GO:0005730">
    <property type="term" value="C:nucleolus"/>
    <property type="evidence" value="ECO:0000314"/>
    <property type="project" value="HPA"/>
</dbReference>
<dbReference type="GO" id="GO:0005654">
    <property type="term" value="C:nucleoplasm"/>
    <property type="evidence" value="ECO:0000304"/>
    <property type="project" value="Reactome"/>
</dbReference>
<dbReference type="GO" id="GO:0034388">
    <property type="term" value="C:Pwp2p-containing subcomplex of 90S preribosome"/>
    <property type="evidence" value="ECO:0000318"/>
    <property type="project" value="GO_Central"/>
</dbReference>
<dbReference type="GO" id="GO:0032040">
    <property type="term" value="C:small-subunit processome"/>
    <property type="evidence" value="ECO:0000314"/>
    <property type="project" value="UniProtKB"/>
</dbReference>
<dbReference type="GO" id="GO:0030515">
    <property type="term" value="F:snoRNA binding"/>
    <property type="evidence" value="ECO:0000318"/>
    <property type="project" value="GO_Central"/>
</dbReference>
<dbReference type="GO" id="GO:0000462">
    <property type="term" value="P:maturation of SSU-rRNA from tricistronic rRNA transcript (SSU-rRNA, 5.8S rRNA, LSU-rRNA)"/>
    <property type="evidence" value="ECO:0000318"/>
    <property type="project" value="GO_Central"/>
</dbReference>
<dbReference type="GO" id="GO:0042274">
    <property type="term" value="P:ribosomal small subunit biogenesis"/>
    <property type="evidence" value="ECO:0000314"/>
    <property type="project" value="UniProtKB"/>
</dbReference>
<dbReference type="FunFam" id="1.25.40.10:FF:000356">
    <property type="entry name" value="U3 small nucleolar RNA-associated protein 6 homolog"/>
    <property type="match status" value="1"/>
</dbReference>
<dbReference type="FunFam" id="1.25.40.10:FF:001123">
    <property type="entry name" value="UTP6 small subunit processome component"/>
    <property type="match status" value="1"/>
</dbReference>
<dbReference type="Gene3D" id="1.25.40.10">
    <property type="entry name" value="Tetratricopeptide repeat domain"/>
    <property type="match status" value="2"/>
</dbReference>
<dbReference type="InterPro" id="IPR003107">
    <property type="entry name" value="HAT"/>
</dbReference>
<dbReference type="InterPro" id="IPR011990">
    <property type="entry name" value="TPR-like_helical_dom_sf"/>
</dbReference>
<dbReference type="InterPro" id="IPR013949">
    <property type="entry name" value="Utp6"/>
</dbReference>
<dbReference type="InterPro" id="IPR056907">
    <property type="entry name" value="UTP6_C"/>
</dbReference>
<dbReference type="InterPro" id="IPR055347">
    <property type="entry name" value="UTP6_N"/>
</dbReference>
<dbReference type="PANTHER" id="PTHR23271">
    <property type="entry name" value="HEPATOCELLULAR CARCINOMA-ASSOCIATED ANTIGEN 66"/>
    <property type="match status" value="1"/>
</dbReference>
<dbReference type="PANTHER" id="PTHR23271:SF3">
    <property type="entry name" value="U3 SMALL NUCLEOLAR RNA-ASSOCIATED PROTEIN 6 HOMOLOG"/>
    <property type="match status" value="1"/>
</dbReference>
<dbReference type="Pfam" id="PF08640">
    <property type="entry name" value="U3_assoc_6"/>
    <property type="match status" value="1"/>
</dbReference>
<dbReference type="Pfam" id="PF24892">
    <property type="entry name" value="UTP6_C"/>
    <property type="match status" value="1"/>
</dbReference>
<dbReference type="SMART" id="SM00386">
    <property type="entry name" value="HAT"/>
    <property type="match status" value="7"/>
</dbReference>
<dbReference type="SUPFAM" id="SSF48452">
    <property type="entry name" value="TPR-like"/>
    <property type="match status" value="2"/>
</dbReference>
<comment type="function">
    <text evidence="4">Part of the small subunit (SSU) processome, first precursor of the small eukaryotic ribosomal subunit. During the assembly of the SSU processome in the nucleolus, many ribosome biogenesis factors, an RNA chaperone and ribosomal proteins associate with the nascent pre-rRNA and work in concert to generate RNA folding, modifications, rearrangements and cleavage as well as targeted degradation of pre-ribosomal RNA by the RNA exosome. Involved in nucleolar processing of pre-18S ribosomal RNA.</text>
</comment>
<comment type="subunit">
    <text evidence="4">Part of the small subunit (SSU) processome, composed of more than 70 proteins and the RNA chaperone small nucleolar RNA (snoRNA) U3.</text>
</comment>
<comment type="interaction">
    <interactant intactId="EBI-749211">
        <id>Q9NYH9</id>
    </interactant>
    <interactant intactId="EBI-1222467">
        <id>P02649</id>
        <label>APOE</label>
    </interactant>
    <organismsDiffer>false</organismsDiffer>
    <experiments>3</experiments>
</comment>
<comment type="interaction">
    <interactant intactId="EBI-749211">
        <id>Q9NYH9</id>
    </interactant>
    <interactant intactId="EBI-10200977">
        <id>P21964-2</id>
        <label>COMT</label>
    </interactant>
    <organismsDiffer>false</organismsDiffer>
    <experiments>3</experiments>
</comment>
<comment type="interaction">
    <interactant intactId="EBI-749211">
        <id>Q9NYH9</id>
    </interactant>
    <interactant intactId="EBI-2869161">
        <id>P32455</id>
        <label>GBP1</label>
    </interactant>
    <organismsDiffer>false</organismsDiffer>
    <experiments>2</experiments>
</comment>
<comment type="interaction">
    <interactant intactId="EBI-749211">
        <id>Q9NYH9</id>
    </interactant>
    <interactant intactId="EBI-466029">
        <id>P42858</id>
        <label>HTT</label>
    </interactant>
    <organismsDiffer>false</organismsDiffer>
    <experiments>3</experiments>
</comment>
<comment type="interaction">
    <interactant intactId="EBI-749211">
        <id>Q9NYH9</id>
    </interactant>
    <interactant intactId="EBI-948266">
        <id>O14901</id>
        <label>KLF11</label>
    </interactant>
    <organismsDiffer>false</organismsDiffer>
    <experiments>3</experiments>
</comment>
<comment type="interaction">
    <interactant intactId="EBI-749211">
        <id>Q9NYH9</id>
    </interactant>
    <interactant intactId="EBI-25842075">
        <id>P21980-2</id>
        <label>TGM2</label>
    </interactant>
    <organismsDiffer>false</organismsDiffer>
    <experiments>3</experiments>
</comment>
<comment type="subcellular location">
    <subcellularLocation>
        <location evidence="2 4">Nucleus</location>
        <location evidence="2 4">Nucleolus</location>
    </subcellularLocation>
</comment>
<comment type="similarity">
    <text evidence="5">Belongs to the UTP6 family.</text>
</comment>
<keyword id="KW-0002">3D-structure</keyword>
<keyword id="KW-0539">Nucleus</keyword>
<keyword id="KW-1267">Proteomics identification</keyword>
<keyword id="KW-1185">Reference proteome</keyword>
<keyword id="KW-0677">Repeat</keyword>
<keyword id="KW-0698">rRNA processing</keyword>
<sequence>MAEIIQERIEDRLPELEQLERIGLFSHAEIKAIIKKASDLEYKIQRRTLFKEDFINYVQYEINLLELIQRRRTRIGYSFKKDEIENSIVHRVQGVFQRASAKWKDDVQLWLSYVAFCKKWATKTRLSKVFSAMLAIHSNKPALWIMAAKWEMEDRLSSESARQLFLRALRFHPECPKLYKEYFRMELMHAEKLRKEKEEFEKASMDVENPDYSEEILKGELAWIIYKNSVSIIKGAEFHVSLLSIAQLFDFAKDLQKEIYDDLQALHTDDPLTWDYVARRELEIESQTEEQPTTKQAKAVEVGRKEERCCAVYEEAVKTLPTEAMWKCYITFCLERFTKKSNSGFLRGKRLERTMTVFRKAHELKLLSECQYKQLSVSLLCYNFLREALEVAVAGTELFRDSGTMWQLKLQVLIESKSPDIAMLFEEAFVHLKPQVCLPLWISWAEWSEGAKSQEDTEAVFKKALLAVIGADSVTLKNKYLDWAYRSGGYKKARAVFKSLQESRPFSVDFFRKMIQFEKEQESCNMANIREYYERALREFGSADSDLWMDYMKEELNHPLGRPENCGQIYWRAMKMLQGESAEAFVAKHAMHQTGHL</sequence>
<gene>
    <name evidence="6" type="primary">UTP6</name>
    <name type="synonym">C17orf40</name>
    <name type="synonym">HCA66</name>
    <name type="synonym">MHAT</name>
</gene>
<protein>
    <recommendedName>
        <fullName>U3 small nucleolar RNA-associated protein 6 homolog</fullName>
    </recommendedName>
    <alternativeName>
        <fullName>Hepatocellular carcinoma-associated antigen 66</fullName>
    </alternativeName>
    <alternativeName>
        <fullName>Multiple hat domains protein</fullName>
    </alternativeName>
</protein>
<feature type="chain" id="PRO_0000205754" description="U3 small nucleolar RNA-associated protein 6 homolog">
    <location>
        <begin position="1"/>
        <end position="597"/>
    </location>
</feature>
<feature type="repeat" description="HAT 1">
    <location>
        <begin position="121"/>
        <end position="153"/>
    </location>
</feature>
<feature type="repeat" description="HAT 2">
    <location>
        <begin position="156"/>
        <end position="188"/>
    </location>
</feature>
<feature type="repeat" description="HAT 3">
    <location>
        <begin position="304"/>
        <end position="335"/>
    </location>
</feature>
<feature type="repeat" description="HAT 4">
    <location>
        <begin position="488"/>
        <end position="520"/>
    </location>
</feature>
<feature type="repeat" description="HAT 5">
    <location>
        <begin position="524"/>
        <end position="557"/>
    </location>
</feature>
<feature type="sequence variant" id="VAR_031222" description="In dbSNP:rs16967042.">
    <original>K</original>
    <variation>R</variation>
    <location>
        <position position="35"/>
    </location>
</feature>
<feature type="sequence variant" id="VAR_026668" description="In dbSNP:rs3760454." evidence="1 3">
    <original>Q</original>
    <variation>R</variation>
    <location>
        <position position="69"/>
    </location>
</feature>
<feature type="sequence variant" id="VAR_049322" description="In dbSNP:rs34859443.">
    <original>L</original>
    <variation>V</variation>
    <location>
        <position position="134"/>
    </location>
</feature>
<organism>
    <name type="scientific">Homo sapiens</name>
    <name type="common">Human</name>
    <dbReference type="NCBI Taxonomy" id="9606"/>
    <lineage>
        <taxon>Eukaryota</taxon>
        <taxon>Metazoa</taxon>
        <taxon>Chordata</taxon>
        <taxon>Craniata</taxon>
        <taxon>Vertebrata</taxon>
        <taxon>Euteleostomi</taxon>
        <taxon>Mammalia</taxon>
        <taxon>Eutheria</taxon>
        <taxon>Euarchontoglires</taxon>
        <taxon>Primates</taxon>
        <taxon>Haplorrhini</taxon>
        <taxon>Catarrhini</taxon>
        <taxon>Hominidae</taxon>
        <taxon>Homo</taxon>
    </lineage>
</organism>
<name>UTP6_HUMAN</name>
<reference key="1">
    <citation type="journal article" date="2002" name="J. Immunol.">
        <title>Large scale identification of human hepatocellular carcinoma-associated antigens by autoantibodies.</title>
        <authorList>
            <person name="Wang Y."/>
            <person name="Han K.-J."/>
            <person name="Pang X.-W."/>
            <person name="Vaughan H.A."/>
            <person name="Qu W."/>
            <person name="Dong X.-Y."/>
            <person name="Peng J.-R."/>
            <person name="Zhao H.-T."/>
            <person name="Rui J.-A."/>
            <person name="Leng X.-S."/>
            <person name="Cebon J."/>
            <person name="Burgess A.W."/>
            <person name="Chen W.-F."/>
        </authorList>
    </citation>
    <scope>NUCLEOTIDE SEQUENCE [MRNA]</scope>
    <scope>VARIANT ARG-69</scope>
    <source>
        <tissue>Hepatoma</tissue>
    </source>
</reference>
<reference key="2">
    <citation type="submission" date="2001-01" db="EMBL/GenBank/DDBJ databases">
        <authorList>
            <person name="Agarwala K.L."/>
            <person name="Suzuki T."/>
            <person name="Tsutsumi Y."/>
            <person name="Amano K."/>
            <person name="Yamakawa K."/>
        </authorList>
    </citation>
    <scope>NUCLEOTIDE SEQUENCE [MRNA]</scope>
</reference>
<reference key="3">
    <citation type="journal article" date="2004" name="Genome Res.">
        <title>The status, quality, and expansion of the NIH full-length cDNA project: the Mammalian Gene Collection (MGC).</title>
        <authorList>
            <consortium name="The MGC Project Team"/>
        </authorList>
    </citation>
    <scope>NUCLEOTIDE SEQUENCE [LARGE SCALE MRNA]</scope>
    <scope>VARIANT ARG-69</scope>
    <source>
        <tissue>Colon</tissue>
        <tissue>Prostate</tissue>
    </source>
</reference>
<reference key="4">
    <citation type="journal article" date="2000" name="Genomics">
        <title>A common set of at least 11 functional genes is lost in the majority of NF1 patients with gross deletions.</title>
        <authorList>
            <person name="Jenne D.E."/>
            <person name="Tinschert S."/>
            <person name="Stegmann E."/>
            <person name="Reimann H."/>
            <person name="Nuernberg P."/>
            <person name="Horn D."/>
            <person name="Naumann I."/>
            <person name="Buske A."/>
            <person name="Thiel G."/>
        </authorList>
    </citation>
    <scope>NUCLEOTIDE SEQUENCE [MRNA] OF 392-597</scope>
</reference>
<reference key="5">
    <citation type="journal article" date="2002" name="Mol. Biol. Cell">
        <title>Functional proteomic analysis of human nucleolus.</title>
        <authorList>
            <person name="Scherl A."/>
            <person name="Coute Y."/>
            <person name="Deon C."/>
            <person name="Calle A."/>
            <person name="Kindbeiter K."/>
            <person name="Sanchez J.-C."/>
            <person name="Greco A."/>
            <person name="Hochstrasser D.F."/>
            <person name="Diaz J.-J."/>
        </authorList>
    </citation>
    <scope>SUBCELLULAR LOCATION [LARGE SCALE ANALYSIS]</scope>
    <source>
        <tissue>Cervix carcinoma</tissue>
    </source>
</reference>
<reference evidence="7 8 9" key="6">
    <citation type="journal article" date="2021" name="Science">
        <title>Nucleolar maturation of the human small subunit processome.</title>
        <authorList>
            <person name="Singh S."/>
            <person name="Vanden Broeck A."/>
            <person name="Miller L."/>
            <person name="Chaker-Margot M."/>
            <person name="Klinge S."/>
        </authorList>
    </citation>
    <scope>STRUCTURE BY ELECTRON MICROSCOPY (2.70 ANGSTROMS)</scope>
    <scope>FUNCTION</scope>
    <scope>SUBUNIT</scope>
    <scope>SUBCELLULAR LOCATION</scope>
</reference>
<proteinExistence type="evidence at protein level"/>